<organism>
    <name type="scientific">Helicobacter pylori (strain Shi470)</name>
    <dbReference type="NCBI Taxonomy" id="512562"/>
    <lineage>
        <taxon>Bacteria</taxon>
        <taxon>Pseudomonadati</taxon>
        <taxon>Campylobacterota</taxon>
        <taxon>Epsilonproteobacteria</taxon>
        <taxon>Campylobacterales</taxon>
        <taxon>Helicobacteraceae</taxon>
        <taxon>Helicobacter</taxon>
    </lineage>
</organism>
<feature type="chain" id="PRO_1000097403" description="Thymidylate kinase">
    <location>
        <begin position="1"/>
        <end position="191"/>
    </location>
</feature>
<feature type="binding site" evidence="1">
    <location>
        <begin position="7"/>
        <end position="14"/>
    </location>
    <ligand>
        <name>ATP</name>
        <dbReference type="ChEBI" id="CHEBI:30616"/>
    </ligand>
</feature>
<dbReference type="EC" id="2.7.4.9" evidence="1"/>
<dbReference type="EMBL" id="CP001072">
    <property type="protein sequence ID" value="ACD48901.1"/>
    <property type="molecule type" value="Genomic_DNA"/>
</dbReference>
<dbReference type="RefSeq" id="WP_000289747.1">
    <property type="nucleotide sequence ID" value="NC_010698.2"/>
</dbReference>
<dbReference type="SMR" id="B2UVL9"/>
<dbReference type="KEGG" id="hps:HPSH_07550"/>
<dbReference type="HOGENOM" id="CLU_049131_0_0_7"/>
<dbReference type="GO" id="GO:0005829">
    <property type="term" value="C:cytosol"/>
    <property type="evidence" value="ECO:0007669"/>
    <property type="project" value="TreeGrafter"/>
</dbReference>
<dbReference type="GO" id="GO:0005524">
    <property type="term" value="F:ATP binding"/>
    <property type="evidence" value="ECO:0007669"/>
    <property type="project" value="UniProtKB-UniRule"/>
</dbReference>
<dbReference type="GO" id="GO:0004798">
    <property type="term" value="F:dTMP kinase activity"/>
    <property type="evidence" value="ECO:0007669"/>
    <property type="project" value="UniProtKB-UniRule"/>
</dbReference>
<dbReference type="GO" id="GO:0006233">
    <property type="term" value="P:dTDP biosynthetic process"/>
    <property type="evidence" value="ECO:0007669"/>
    <property type="project" value="InterPro"/>
</dbReference>
<dbReference type="GO" id="GO:0006235">
    <property type="term" value="P:dTTP biosynthetic process"/>
    <property type="evidence" value="ECO:0007669"/>
    <property type="project" value="UniProtKB-UniRule"/>
</dbReference>
<dbReference type="GO" id="GO:0006227">
    <property type="term" value="P:dUDP biosynthetic process"/>
    <property type="evidence" value="ECO:0007669"/>
    <property type="project" value="TreeGrafter"/>
</dbReference>
<dbReference type="CDD" id="cd01672">
    <property type="entry name" value="TMPK"/>
    <property type="match status" value="1"/>
</dbReference>
<dbReference type="Gene3D" id="3.40.50.300">
    <property type="entry name" value="P-loop containing nucleotide triphosphate hydrolases"/>
    <property type="match status" value="1"/>
</dbReference>
<dbReference type="HAMAP" id="MF_00165">
    <property type="entry name" value="Thymidylate_kinase"/>
    <property type="match status" value="1"/>
</dbReference>
<dbReference type="InterPro" id="IPR027417">
    <property type="entry name" value="P-loop_NTPase"/>
</dbReference>
<dbReference type="InterPro" id="IPR039430">
    <property type="entry name" value="Thymidylate_kin-like_dom"/>
</dbReference>
<dbReference type="InterPro" id="IPR018095">
    <property type="entry name" value="Thymidylate_kin_CS"/>
</dbReference>
<dbReference type="InterPro" id="IPR018094">
    <property type="entry name" value="Thymidylate_kinase"/>
</dbReference>
<dbReference type="NCBIfam" id="TIGR00041">
    <property type="entry name" value="DTMP_kinase"/>
    <property type="match status" value="1"/>
</dbReference>
<dbReference type="PANTHER" id="PTHR10344">
    <property type="entry name" value="THYMIDYLATE KINASE"/>
    <property type="match status" value="1"/>
</dbReference>
<dbReference type="PANTHER" id="PTHR10344:SF4">
    <property type="entry name" value="UMP-CMP KINASE 2, MITOCHONDRIAL"/>
    <property type="match status" value="1"/>
</dbReference>
<dbReference type="Pfam" id="PF02223">
    <property type="entry name" value="Thymidylate_kin"/>
    <property type="match status" value="1"/>
</dbReference>
<dbReference type="SUPFAM" id="SSF52540">
    <property type="entry name" value="P-loop containing nucleoside triphosphate hydrolases"/>
    <property type="match status" value="1"/>
</dbReference>
<dbReference type="PROSITE" id="PS01331">
    <property type="entry name" value="THYMIDYLATE_KINASE"/>
    <property type="match status" value="1"/>
</dbReference>
<proteinExistence type="inferred from homology"/>
<keyword id="KW-0067">ATP-binding</keyword>
<keyword id="KW-0418">Kinase</keyword>
<keyword id="KW-0545">Nucleotide biosynthesis</keyword>
<keyword id="KW-0547">Nucleotide-binding</keyword>
<keyword id="KW-0808">Transferase</keyword>
<gene>
    <name evidence="1" type="primary">tmk</name>
    <name type="ordered locus">HPSH_07550</name>
</gene>
<name>KTHY_HELPS</name>
<sequence length="191" mass="21422">MYVVLEGVDGAGKSTQVGLLKDRFKNALVTKEPGGTRMGEHLRHIALNENISELARAFLFLSDRAEHIESVIKPALKEKKLIISDRSLISGMAYSQFSSLELNLLATQSVLPDKIILLLIDKEGLKQRLSHKSLDKIENQGTEKLLTIQQKLKTHAHALKEQFGCEVLELDAQKSVWDLHRQIVAFIECVV</sequence>
<accession>B2UVL9</accession>
<protein>
    <recommendedName>
        <fullName evidence="1">Thymidylate kinase</fullName>
        <ecNumber evidence="1">2.7.4.9</ecNumber>
    </recommendedName>
    <alternativeName>
        <fullName evidence="1">dTMP kinase</fullName>
    </alternativeName>
</protein>
<evidence type="ECO:0000255" key="1">
    <source>
        <dbReference type="HAMAP-Rule" id="MF_00165"/>
    </source>
</evidence>
<reference key="1">
    <citation type="submission" date="2008-05" db="EMBL/GenBank/DDBJ databases">
        <title>Genome sequence of Helicobacter pylori from the remote Amazon: traces of Asian ancestry of the first Americans.</title>
        <authorList>
            <person name="Kersulyte D."/>
            <person name="Kalia A."/>
            <person name="Gilman R.H."/>
            <person name="Berg D.E."/>
        </authorList>
    </citation>
    <scope>NUCLEOTIDE SEQUENCE [LARGE SCALE GENOMIC DNA]</scope>
    <source>
        <strain>Shi470</strain>
    </source>
</reference>
<comment type="function">
    <text evidence="1">Phosphorylation of dTMP to form dTDP in both de novo and salvage pathways of dTTP synthesis.</text>
</comment>
<comment type="catalytic activity">
    <reaction evidence="1">
        <text>dTMP + ATP = dTDP + ADP</text>
        <dbReference type="Rhea" id="RHEA:13517"/>
        <dbReference type="ChEBI" id="CHEBI:30616"/>
        <dbReference type="ChEBI" id="CHEBI:58369"/>
        <dbReference type="ChEBI" id="CHEBI:63528"/>
        <dbReference type="ChEBI" id="CHEBI:456216"/>
        <dbReference type="EC" id="2.7.4.9"/>
    </reaction>
</comment>
<comment type="similarity">
    <text evidence="1">Belongs to the thymidylate kinase family.</text>
</comment>